<comment type="function">
    <text evidence="2">Has an optimum specificity for 4-carbon length fatty acyl-CoAs.</text>
</comment>
<comment type="catalytic activity">
    <reaction evidence="2">
        <text>butanoyl-CoA + oxidized [electron-transfer flavoprotein] + H(+) = (2E)-butenoyl-CoA + reduced [electron-transfer flavoprotein]</text>
        <dbReference type="Rhea" id="RHEA:24004"/>
        <dbReference type="Rhea" id="RHEA-COMP:10685"/>
        <dbReference type="Rhea" id="RHEA-COMP:10686"/>
        <dbReference type="ChEBI" id="CHEBI:15378"/>
        <dbReference type="ChEBI" id="CHEBI:57332"/>
        <dbReference type="ChEBI" id="CHEBI:57371"/>
        <dbReference type="ChEBI" id="CHEBI:57692"/>
        <dbReference type="ChEBI" id="CHEBI:58307"/>
        <dbReference type="EC" id="1.3.8.1"/>
    </reaction>
</comment>
<comment type="catalytic activity">
    <reaction evidence="1">
        <text>a short-chain 2,3-saturated fatty acyl-CoA + oxidized [electron-transfer flavoprotein] + H(+) = a short-chain (2E)-enoyl-CoA + reduced [electron-transfer flavoprotein]</text>
        <dbReference type="Rhea" id="RHEA:47196"/>
        <dbReference type="Rhea" id="RHEA-COMP:10685"/>
        <dbReference type="Rhea" id="RHEA-COMP:10686"/>
        <dbReference type="ChEBI" id="CHEBI:15378"/>
        <dbReference type="ChEBI" id="CHEBI:57692"/>
        <dbReference type="ChEBI" id="CHEBI:58307"/>
        <dbReference type="ChEBI" id="CHEBI:87487"/>
        <dbReference type="ChEBI" id="CHEBI:87488"/>
        <dbReference type="EC" id="1.3.8.1"/>
    </reaction>
</comment>
<comment type="cofactor">
    <cofactor>
        <name>FAD</name>
        <dbReference type="ChEBI" id="CHEBI:57692"/>
    </cofactor>
</comment>
<comment type="subunit">
    <text>Homotetramer.</text>
</comment>
<comment type="similarity">
    <text evidence="3">Belongs to the acyl-CoA dehydrogenase family.</text>
</comment>
<reference key="1">
    <citation type="journal article" date="1993" name="Biochemistry">
        <title>Characterization of wild-type and an active-site mutant in Escherichia coli of short-chain acyl-CoA dehydrogenase from Megasphaera elsdenii.</title>
        <authorList>
            <person name="Becker D.F."/>
            <person name="Fuchs J.A."/>
            <person name="Banfield D.K."/>
            <person name="Funk W.D."/>
            <person name="Macgillivray R.T.A."/>
            <person name="Stankovich M.T."/>
        </authorList>
    </citation>
    <scope>NUCLEOTIDE SEQUENCE [GENOMIC DNA]</scope>
    <scope>PROTEIN SEQUENCE OF 1-50</scope>
    <scope>FUNCTION</scope>
    <scope>CATALYTIC ACTIVITY</scope>
    <scope>ACTIVE SITE</scope>
    <scope>MUTAGENESIS OF GLU-367</scope>
</reference>
<reference key="2">
    <citation type="journal article" date="1995" name="Biochemistry">
        <title>Three-dimensional structure of butyryl-CoA dehydrogenase from Megasphaera elsdenii.</title>
        <authorList>
            <person name="Djordjevic S."/>
            <person name="Pace C.P."/>
            <person name="Stankovich M.T."/>
            <person name="Kim J.-J.P."/>
        </authorList>
    </citation>
    <scope>X-RAY CRYSTALLOGRAPHY (2.5 ANGSTROMS)</scope>
</reference>
<evidence type="ECO:0000250" key="1">
    <source>
        <dbReference type="UniProtKB" id="P52042"/>
    </source>
</evidence>
<evidence type="ECO:0000269" key="2">
    <source>
    </source>
</evidence>
<evidence type="ECO:0000305" key="3"/>
<evidence type="ECO:0007829" key="4">
    <source>
        <dbReference type="PDB" id="1BUC"/>
    </source>
</evidence>
<keyword id="KW-0002">3D-structure</keyword>
<keyword id="KW-0903">Direct protein sequencing</keyword>
<keyword id="KW-0274">FAD</keyword>
<keyword id="KW-0276">Fatty acid metabolism</keyword>
<keyword id="KW-0285">Flavoprotein</keyword>
<keyword id="KW-0443">Lipid metabolism</keyword>
<keyword id="KW-0560">Oxidoreductase</keyword>
<feature type="chain" id="PRO_0000201190" description="Acyl-CoA dehydrogenase, short-chain specific">
    <location>
        <begin position="1"/>
        <end position="383"/>
    </location>
</feature>
<feature type="active site" description="Proton acceptor" evidence="2">
    <location>
        <position position="367"/>
    </location>
</feature>
<feature type="mutagenesis site" description="Loss of activity." evidence="2">
    <original>E</original>
    <variation>Q</variation>
    <location>
        <position position="367"/>
    </location>
</feature>
<feature type="helix" evidence="4">
    <location>
        <begin position="7"/>
        <end position="22"/>
    </location>
</feature>
<feature type="turn" evidence="4">
    <location>
        <begin position="23"/>
        <end position="27"/>
    </location>
</feature>
<feature type="helix" evidence="4">
    <location>
        <begin position="28"/>
        <end position="34"/>
    </location>
</feature>
<feature type="helix" evidence="4">
    <location>
        <begin position="39"/>
        <end position="46"/>
    </location>
</feature>
<feature type="helix" evidence="4">
    <location>
        <begin position="50"/>
        <end position="52"/>
    </location>
</feature>
<feature type="helix" evidence="4">
    <location>
        <begin position="57"/>
        <end position="59"/>
    </location>
</feature>
<feature type="helix" evidence="4">
    <location>
        <begin position="62"/>
        <end position="65"/>
    </location>
</feature>
<feature type="helix" evidence="4">
    <location>
        <begin position="69"/>
        <end position="82"/>
    </location>
</feature>
<feature type="helix" evidence="4">
    <location>
        <begin position="84"/>
        <end position="96"/>
    </location>
</feature>
<feature type="helix" evidence="4">
    <location>
        <begin position="98"/>
        <end position="104"/>
    </location>
</feature>
<feature type="helix" evidence="4">
    <location>
        <begin position="107"/>
        <end position="112"/>
    </location>
</feature>
<feature type="helix" evidence="4">
    <location>
        <begin position="114"/>
        <end position="119"/>
    </location>
</feature>
<feature type="strand" evidence="4">
    <location>
        <begin position="124"/>
        <end position="127"/>
    </location>
</feature>
<feature type="strand" evidence="4">
    <location>
        <begin position="133"/>
        <end position="135"/>
    </location>
</feature>
<feature type="helix" evidence="4">
    <location>
        <begin position="137"/>
        <end position="139"/>
    </location>
</feature>
<feature type="strand" evidence="4">
    <location>
        <begin position="143"/>
        <end position="146"/>
    </location>
</feature>
<feature type="strand" evidence="4">
    <location>
        <begin position="152"/>
        <end position="162"/>
    </location>
</feature>
<feature type="turn" evidence="4">
    <location>
        <begin position="163"/>
        <end position="166"/>
    </location>
</feature>
<feature type="strand" evidence="4">
    <location>
        <begin position="168"/>
        <end position="176"/>
    </location>
</feature>
<feature type="strand" evidence="4">
    <location>
        <begin position="178"/>
        <end position="181"/>
    </location>
</feature>
<feature type="strand" evidence="4">
    <location>
        <begin position="184"/>
        <end position="191"/>
    </location>
</feature>
<feature type="strand" evidence="4">
    <location>
        <begin position="197"/>
        <end position="202"/>
    </location>
</feature>
<feature type="strand" evidence="4">
    <location>
        <begin position="213"/>
        <end position="223"/>
    </location>
</feature>
<feature type="helix" evidence="4">
    <location>
        <begin position="225"/>
        <end position="227"/>
    </location>
</feature>
<feature type="strand" evidence="4">
    <location>
        <begin position="228"/>
        <end position="230"/>
    </location>
</feature>
<feature type="helix" evidence="4">
    <location>
        <begin position="235"/>
        <end position="271"/>
    </location>
</feature>
<feature type="helix" evidence="4">
    <location>
        <begin position="279"/>
        <end position="281"/>
    </location>
</feature>
<feature type="helix" evidence="4">
    <location>
        <begin position="283"/>
        <end position="312"/>
    </location>
</feature>
<feature type="helix" evidence="4">
    <location>
        <begin position="317"/>
        <end position="342"/>
    </location>
</feature>
<feature type="helix" evidence="4">
    <location>
        <begin position="343"/>
        <end position="347"/>
    </location>
</feature>
<feature type="helix" evidence="4">
    <location>
        <begin position="353"/>
        <end position="360"/>
    </location>
</feature>
<feature type="helix" evidence="4">
    <location>
        <begin position="361"/>
        <end position="364"/>
    </location>
</feature>
<feature type="turn" evidence="4">
    <location>
        <begin position="365"/>
        <end position="367"/>
    </location>
</feature>
<feature type="helix" evidence="4">
    <location>
        <begin position="370"/>
        <end position="381"/>
    </location>
</feature>
<organism>
    <name type="scientific">Megasphaera elsdenii</name>
    <dbReference type="NCBI Taxonomy" id="907"/>
    <lineage>
        <taxon>Bacteria</taxon>
        <taxon>Bacillati</taxon>
        <taxon>Bacillota</taxon>
        <taxon>Negativicutes</taxon>
        <taxon>Veillonellales</taxon>
        <taxon>Veillonellaceae</taxon>
        <taxon>Megasphaera</taxon>
    </lineage>
</organism>
<sequence length="383" mass="41408">MDFNLTDIQQDFLKLAHDFGEKKLAPTVTERDHKGIYDKELIDELLSLGITGAYFEEKYGGSGDDGGDVLSYILAVEELAKYDAGVAITLSATVSLCANPIWQFGTEAQKEKFLVPLVEGTKLGAFGLTEPNAGTDASGQQTIATKNDDGTYTLNGSKIFITNGGAADIYIVFAMTDKSKGNHGITAFILEDGTPGFTYGKKEDKMGIHTSQTMELVFQDVKVPAENMLGEEGKGFKIAMMTLDGGRIGVAAQALGIAEAALADAVEYSKQRVQFGKPLCKFQSISFKLADMKMQIEAARNLVYKAACKKQEGKPFTVDAAIAKRVASDVAMRVTTEAVQIFGGYGYSEEYPVARHMRDAKITQIYEGTNEVQLMVTGGALLR</sequence>
<dbReference type="EC" id="1.3.8.1" evidence="2"/>
<dbReference type="EMBL" id="L04528">
    <property type="protein sequence ID" value="AAA03594.1"/>
    <property type="molecule type" value="Unassigned_DNA"/>
</dbReference>
<dbReference type="RefSeq" id="WP_014017064.1">
    <property type="nucleotide sequence ID" value="NZ_NQMW01000006.1"/>
</dbReference>
<dbReference type="PDB" id="1BUC">
    <property type="method" value="X-ray"/>
    <property type="resolution" value="2.50 A"/>
    <property type="chains" value="A/B=1-383"/>
</dbReference>
<dbReference type="PDBsum" id="1BUC"/>
<dbReference type="SMR" id="Q06319"/>
<dbReference type="DrugBank" id="DB03059">
    <property type="generic name" value="Acetoacetyl-CoA"/>
</dbReference>
<dbReference type="DrugBank" id="DB03147">
    <property type="generic name" value="Flavin adenine dinucleotide"/>
</dbReference>
<dbReference type="GeneID" id="97492323"/>
<dbReference type="OrthoDB" id="9802447at2"/>
<dbReference type="BioCyc" id="MetaCyc:MONOMER-11937"/>
<dbReference type="EvolutionaryTrace" id="Q06319"/>
<dbReference type="GO" id="GO:0050660">
    <property type="term" value="F:flavin adenine dinucleotide binding"/>
    <property type="evidence" value="ECO:0007669"/>
    <property type="project" value="InterPro"/>
</dbReference>
<dbReference type="GO" id="GO:0016937">
    <property type="term" value="F:short-chain fatty acyl-CoA dehydrogenase activity"/>
    <property type="evidence" value="ECO:0007669"/>
    <property type="project" value="UniProtKB-EC"/>
</dbReference>
<dbReference type="GO" id="GO:0006631">
    <property type="term" value="P:fatty acid metabolic process"/>
    <property type="evidence" value="ECO:0007669"/>
    <property type="project" value="UniProtKB-KW"/>
</dbReference>
<dbReference type="CDD" id="cd01158">
    <property type="entry name" value="SCAD_SBCAD"/>
    <property type="match status" value="1"/>
</dbReference>
<dbReference type="FunFam" id="1.10.540.10:FF:000002">
    <property type="entry name" value="Acyl-CoA dehydrogenase FadE19"/>
    <property type="match status" value="1"/>
</dbReference>
<dbReference type="FunFam" id="1.20.140.10:FF:000004">
    <property type="entry name" value="Acyl-CoA dehydrogenase FadE25"/>
    <property type="match status" value="1"/>
</dbReference>
<dbReference type="FunFam" id="2.40.110.10:FF:000001">
    <property type="entry name" value="Acyl-CoA dehydrogenase, mitochondrial"/>
    <property type="match status" value="1"/>
</dbReference>
<dbReference type="Gene3D" id="1.10.540.10">
    <property type="entry name" value="Acyl-CoA dehydrogenase/oxidase, N-terminal domain"/>
    <property type="match status" value="1"/>
</dbReference>
<dbReference type="Gene3D" id="2.40.110.10">
    <property type="entry name" value="Butyryl-CoA Dehydrogenase, subunit A, domain 2"/>
    <property type="match status" value="1"/>
</dbReference>
<dbReference type="Gene3D" id="1.20.140.10">
    <property type="entry name" value="Butyryl-CoA Dehydrogenase, subunit A, domain 3"/>
    <property type="match status" value="1"/>
</dbReference>
<dbReference type="InterPro" id="IPR006089">
    <property type="entry name" value="Acyl-CoA_DH_CS"/>
</dbReference>
<dbReference type="InterPro" id="IPR006091">
    <property type="entry name" value="Acyl-CoA_Oxase/DH_mid-dom"/>
</dbReference>
<dbReference type="InterPro" id="IPR046373">
    <property type="entry name" value="Acyl-CoA_Oxase/DH_mid-dom_sf"/>
</dbReference>
<dbReference type="InterPro" id="IPR036250">
    <property type="entry name" value="AcylCo_DH-like_C"/>
</dbReference>
<dbReference type="InterPro" id="IPR009075">
    <property type="entry name" value="AcylCo_DH/oxidase_C"/>
</dbReference>
<dbReference type="InterPro" id="IPR013786">
    <property type="entry name" value="AcylCoA_DH/ox_N"/>
</dbReference>
<dbReference type="InterPro" id="IPR037069">
    <property type="entry name" value="AcylCoA_DH/ox_N_sf"/>
</dbReference>
<dbReference type="InterPro" id="IPR009100">
    <property type="entry name" value="AcylCoA_DH/oxidase_NM_dom_sf"/>
</dbReference>
<dbReference type="PANTHER" id="PTHR43884">
    <property type="entry name" value="ACYL-COA DEHYDROGENASE"/>
    <property type="match status" value="1"/>
</dbReference>
<dbReference type="PANTHER" id="PTHR43884:SF12">
    <property type="entry name" value="ISOVALERYL-COA DEHYDROGENASE, MITOCHONDRIAL-RELATED"/>
    <property type="match status" value="1"/>
</dbReference>
<dbReference type="Pfam" id="PF00441">
    <property type="entry name" value="Acyl-CoA_dh_1"/>
    <property type="match status" value="1"/>
</dbReference>
<dbReference type="Pfam" id="PF02770">
    <property type="entry name" value="Acyl-CoA_dh_M"/>
    <property type="match status" value="1"/>
</dbReference>
<dbReference type="Pfam" id="PF02771">
    <property type="entry name" value="Acyl-CoA_dh_N"/>
    <property type="match status" value="1"/>
</dbReference>
<dbReference type="PIRSF" id="PIRSF016578">
    <property type="entry name" value="HsaA"/>
    <property type="match status" value="1"/>
</dbReference>
<dbReference type="SUPFAM" id="SSF47203">
    <property type="entry name" value="Acyl-CoA dehydrogenase C-terminal domain-like"/>
    <property type="match status" value="1"/>
</dbReference>
<dbReference type="SUPFAM" id="SSF56645">
    <property type="entry name" value="Acyl-CoA dehydrogenase NM domain-like"/>
    <property type="match status" value="1"/>
</dbReference>
<dbReference type="PROSITE" id="PS00072">
    <property type="entry name" value="ACYL_COA_DH_1"/>
    <property type="match status" value="1"/>
</dbReference>
<dbReference type="PROSITE" id="PS00073">
    <property type="entry name" value="ACYL_COA_DH_2"/>
    <property type="match status" value="1"/>
</dbReference>
<accession>Q06319</accession>
<name>ACDS_MEGEL</name>
<protein>
    <recommendedName>
        <fullName>Acyl-CoA dehydrogenase, short-chain specific</fullName>
        <ecNumber evidence="2">1.3.8.1</ecNumber>
    </recommendedName>
    <alternativeName>
        <fullName>Butyryl-CoA dehydrogenase</fullName>
        <shortName>BCAD</shortName>
    </alternativeName>
    <alternativeName>
        <fullName>SCAD</fullName>
    </alternativeName>
</protein>
<proteinExistence type="evidence at protein level"/>